<dbReference type="EMBL" id="AM180088">
    <property type="protein sequence ID" value="CAJ52479.1"/>
    <property type="molecule type" value="Genomic_DNA"/>
</dbReference>
<dbReference type="RefSeq" id="WP_011571604.1">
    <property type="nucleotide sequence ID" value="NC_008212.1"/>
</dbReference>
<dbReference type="SMR" id="Q18HQ7"/>
<dbReference type="STRING" id="362976.HQ_2358A"/>
<dbReference type="GeneID" id="4194661"/>
<dbReference type="KEGG" id="hwa:HQ_2358A"/>
<dbReference type="eggNOG" id="arCOG04186">
    <property type="taxonomic scope" value="Archaea"/>
</dbReference>
<dbReference type="HOGENOM" id="CLU_062507_1_0_2"/>
<dbReference type="Proteomes" id="UP000001975">
    <property type="component" value="Chromosome"/>
</dbReference>
<dbReference type="GO" id="GO:1990904">
    <property type="term" value="C:ribonucleoprotein complex"/>
    <property type="evidence" value="ECO:0007669"/>
    <property type="project" value="UniProtKB-KW"/>
</dbReference>
<dbReference type="GO" id="GO:0005840">
    <property type="term" value="C:ribosome"/>
    <property type="evidence" value="ECO:0007669"/>
    <property type="project" value="UniProtKB-KW"/>
</dbReference>
<dbReference type="GO" id="GO:0003735">
    <property type="term" value="F:structural constituent of ribosome"/>
    <property type="evidence" value="ECO:0007669"/>
    <property type="project" value="InterPro"/>
</dbReference>
<dbReference type="GO" id="GO:0006412">
    <property type="term" value="P:translation"/>
    <property type="evidence" value="ECO:0007669"/>
    <property type="project" value="UniProtKB-UniRule"/>
</dbReference>
<dbReference type="HAMAP" id="MF_00359">
    <property type="entry name" value="Ribosomal_eS1"/>
    <property type="match status" value="1"/>
</dbReference>
<dbReference type="InterPro" id="IPR001593">
    <property type="entry name" value="Ribosomal_eS1"/>
</dbReference>
<dbReference type="InterPro" id="IPR030838">
    <property type="entry name" value="Ribosomal_eS1_arc"/>
</dbReference>
<dbReference type="InterPro" id="IPR018281">
    <property type="entry name" value="Ribosomal_eS1_CS"/>
</dbReference>
<dbReference type="NCBIfam" id="NF003142">
    <property type="entry name" value="PRK04057.1"/>
    <property type="match status" value="1"/>
</dbReference>
<dbReference type="PANTHER" id="PTHR11830">
    <property type="entry name" value="40S RIBOSOMAL PROTEIN S3A"/>
    <property type="match status" value="1"/>
</dbReference>
<dbReference type="Pfam" id="PF01015">
    <property type="entry name" value="Ribosomal_S3Ae"/>
    <property type="match status" value="1"/>
</dbReference>
<dbReference type="SMART" id="SM01397">
    <property type="entry name" value="Ribosomal_S3Ae"/>
    <property type="match status" value="1"/>
</dbReference>
<dbReference type="PROSITE" id="PS01191">
    <property type="entry name" value="RIBOSOMAL_S3AE"/>
    <property type="match status" value="1"/>
</dbReference>
<reference key="1">
    <citation type="journal article" date="2006" name="BMC Genomics">
        <title>The genome of the square archaeon Haloquadratum walsbyi: life at the limits of water activity.</title>
        <authorList>
            <person name="Bolhuis H."/>
            <person name="Palm P."/>
            <person name="Wende A."/>
            <person name="Falb M."/>
            <person name="Rampp M."/>
            <person name="Rodriguez-Valera F."/>
            <person name="Pfeiffer F."/>
            <person name="Oesterhelt D."/>
        </authorList>
    </citation>
    <scope>NUCLEOTIDE SEQUENCE [LARGE SCALE GENOMIC DNA]</scope>
    <source>
        <strain>DSM 16790 / HBSQ001</strain>
    </source>
</reference>
<gene>
    <name evidence="1" type="primary">rps3ae</name>
    <name type="ordered locus">HQ_2358A</name>
</gene>
<accession>Q18HQ7</accession>
<protein>
    <recommendedName>
        <fullName evidence="1">Small ribosomal subunit protein eS1</fullName>
    </recommendedName>
    <alternativeName>
        <fullName evidence="2">30S ribosomal protein S3Ae</fullName>
    </alternativeName>
    <alternativeName>
        <fullName evidence="1">Ribosomal protein S1e</fullName>
    </alternativeName>
</protein>
<keyword id="KW-1185">Reference proteome</keyword>
<keyword id="KW-0687">Ribonucleoprotein</keyword>
<keyword id="KW-0689">Ribosomal protein</keyword>
<evidence type="ECO:0000255" key="1">
    <source>
        <dbReference type="HAMAP-Rule" id="MF_00359"/>
    </source>
</evidence>
<evidence type="ECO:0000305" key="2"/>
<name>RS3A_HALWD</name>
<comment type="similarity">
    <text evidence="1">Belongs to the eukaryotic ribosomal protein eS1 family.</text>
</comment>
<feature type="chain" id="PRO_1000005189" description="Small ribosomal subunit protein eS1">
    <location>
        <begin position="1"/>
        <end position="212"/>
    </location>
</feature>
<organism>
    <name type="scientific">Haloquadratum walsbyi (strain DSM 16790 / HBSQ001)</name>
    <dbReference type="NCBI Taxonomy" id="362976"/>
    <lineage>
        <taxon>Archaea</taxon>
        <taxon>Methanobacteriati</taxon>
        <taxon>Methanobacteriota</taxon>
        <taxon>Stenosarchaea group</taxon>
        <taxon>Halobacteria</taxon>
        <taxon>Halobacteriales</taxon>
        <taxon>Haloferacaceae</taxon>
        <taxon>Haloquadratum</taxon>
    </lineage>
</organism>
<proteinExistence type="inferred from homology"/>
<sequence length="212" mass="23673">MSERSVSKQKSSDRWYSIIAPEQFDRSELGSTFADDPEKIHGRTLEVTLGDITGDQGENNTKLTFKVNDVTSDAAYTEFIKHELARDYLRSLIRRGASKIDAAITVRTTDDYRVQLQPVAFTTKKADRSQEQAIRRVMIDLVEDAADERTFADLIDAAIEGQLSSAIYGEAKTIYPLRRVEVKKLTLEARPEEVAAEEAAAVDVDEADVAVE</sequence>